<organism evidence="20">
    <name type="scientific">Drosophila melanogaster</name>
    <name type="common">Fruit fly</name>
    <dbReference type="NCBI Taxonomy" id="7227"/>
    <lineage>
        <taxon>Eukaryota</taxon>
        <taxon>Metazoa</taxon>
        <taxon>Ecdysozoa</taxon>
        <taxon>Arthropoda</taxon>
        <taxon>Hexapoda</taxon>
        <taxon>Insecta</taxon>
        <taxon>Pterygota</taxon>
        <taxon>Neoptera</taxon>
        <taxon>Endopterygota</taxon>
        <taxon>Diptera</taxon>
        <taxon>Brachycera</taxon>
        <taxon>Muscomorpha</taxon>
        <taxon>Ephydroidea</taxon>
        <taxon>Drosophilidae</taxon>
        <taxon>Drosophila</taxon>
        <taxon>Sophophora</taxon>
    </lineage>
</organism>
<protein>
    <recommendedName>
        <fullName>Serine/threonine-protein kinase grp</fullName>
        <ecNumber>2.7.11.1</ecNumber>
    </recommendedName>
    <alternativeName>
        <fullName>Chk1 homolog</fullName>
    </alternativeName>
    <alternativeName>
        <fullName>Protein grapes</fullName>
    </alternativeName>
</protein>
<accession>O61661</accession>
<accession>A4V0S9</accession>
<accession>Q960N7</accession>
<sequence>MAATLTEAGTGPAATREFVEGWTLAQTLGEGAYGEVKLLINRQTGEAVAMKMVDLKKHPDAANSVRKEVCIQKMLQDKHILRFFGKRSQGSVEYIFLEYAAGGELFDRIEPDVGMPQHEAQRYFTQLLSGLNYLHQRGIAHRDLKPENLLLDEHDNVKISDFGMATMFRCKGKERLLDKRCGTLPYVAPEVLQKAYHAQPADLWSCGVILVTMLAGELPWDQPSTNCTEFTNWRDNDHWQLQTPWSKLDTLAISLLRKLLATSPGTRLTLEKTLDHKWCNMQFADNERSYDLVDSAAALEICSPKAKRQRLQSSAHLSNGLDDSISRNYCSQPMPTMRSDDDFNVRLGSGRSKEDGGDRQTLAQEARLSYSFSQPALLDDLLLATQMNQTQNASQNYFQRLVRRMTRFFVTTRWDDTIKRLVGTIERLGGYTCKFGDDGVVTVSTVDRNKLRLVFKAHIIEMDGKILVDCRLSKGCGLEFKRRFIKIKNALEDIVLKGPTTWPIAIATNSVP</sequence>
<feature type="chain" id="PRO_0000085855" description="Serine/threonine-protein kinase grp">
    <location>
        <begin position="1"/>
        <end position="512"/>
    </location>
</feature>
<feature type="domain" description="Protein kinase" evidence="2">
    <location>
        <begin position="22"/>
        <end position="279"/>
    </location>
</feature>
<feature type="region of interest" description="Disordered" evidence="3">
    <location>
        <begin position="335"/>
        <end position="360"/>
    </location>
</feature>
<feature type="active site" description="Proton acceptor" evidence="19">
    <location>
        <position position="143"/>
    </location>
</feature>
<feature type="binding site" evidence="1 2">
    <location>
        <begin position="28"/>
        <end position="36"/>
    </location>
    <ligand>
        <name>ATP</name>
        <dbReference type="ChEBI" id="CHEBI:30616"/>
    </ligand>
</feature>
<feature type="binding site" evidence="1 2">
    <location>
        <position position="51"/>
    </location>
    <ligand>
        <name>ATP</name>
        <dbReference type="ChEBI" id="CHEBI:30616"/>
    </ligand>
</feature>
<feature type="mutagenesis site" description="Abolishes kinase activity." evidence="8">
    <original>D</original>
    <variation>A</variation>
    <location>
        <position position="143"/>
    </location>
</feature>
<feature type="mutagenesis site" description="Impaired cell cycle arrest in response to the DNA synthesis inhibitor hydroxyurea (HU)." evidence="15">
    <original>P</original>
    <variation>L</variation>
    <location>
        <position position="189"/>
    </location>
</feature>
<feature type="sequence conflict" description="In Ref. 1; AAC13566." evidence="19" ref="1">
    <original>EAVA</original>
    <variation>GGCG</variation>
    <location>
        <begin position="46"/>
        <end position="49"/>
    </location>
</feature>
<feature type="sequence conflict" description="In Ref. 1; AAC13566." evidence="19" ref="1">
    <original>HA</original>
    <variation>QP</variation>
    <location>
        <begin position="197"/>
        <end position="198"/>
    </location>
</feature>
<feature type="sequence conflict" description="In Ref. 1; AAC13566." evidence="19" ref="1">
    <original>L</original>
    <variation>LL</variation>
    <location>
        <position position="260"/>
    </location>
</feature>
<feature type="sequence conflict" description="In Ref. 1; AAC13566." evidence="19" ref="1">
    <original>S</original>
    <variation>T</variation>
    <location>
        <position position="339"/>
    </location>
</feature>
<feature type="sequence conflict" description="In Ref. 1; AAC13566." evidence="19" ref="1">
    <original>SKEDGGDR</original>
    <variation>IQGGWRRP</variation>
    <location>
        <begin position="352"/>
        <end position="359"/>
    </location>
</feature>
<keyword id="KW-0067">ATP-binding</keyword>
<keyword id="KW-0131">Cell cycle</keyword>
<keyword id="KW-0217">Developmental protein</keyword>
<keyword id="KW-0227">DNA damage</keyword>
<keyword id="KW-0418">Kinase</keyword>
<keyword id="KW-0547">Nucleotide-binding</keyword>
<keyword id="KW-0539">Nucleus</keyword>
<keyword id="KW-1185">Reference proteome</keyword>
<keyword id="KW-0723">Serine/threonine-protein kinase</keyword>
<keyword id="KW-0808">Transferase</keyword>
<gene>
    <name evidence="21" type="primary">grp</name>
    <name evidence="21" type="ORF">CG17161</name>
</gene>
<reference evidence="19" key="1">
    <citation type="journal article" date="1997" name="Curr. Biol.">
        <title>The Drosophila grapes gene is related to checkpoint gene chk1/rad27 and is required for late syncytial division fidelity.</title>
        <authorList>
            <person name="Fogarty P."/>
            <person name="Campbell S.D."/>
            <person name="Abu-Shumays R."/>
            <person name="de Saint Phalle B."/>
            <person name="Yu K.R."/>
            <person name="Uy G.L."/>
            <person name="Goldberg M.L."/>
            <person name="Sullivan W."/>
        </authorList>
    </citation>
    <scope>NUCLEOTIDE SEQUENCE [MRNA]</scope>
    <scope>FUNCTION</scope>
    <scope>DEVELOPMENTAL STAGE</scope>
</reference>
<reference evidence="19" key="2">
    <citation type="journal article" date="2000" name="Science">
        <title>The genome sequence of Drosophila melanogaster.</title>
        <authorList>
            <person name="Adams M.D."/>
            <person name="Celniker S.E."/>
            <person name="Holt R.A."/>
            <person name="Evans C.A."/>
            <person name="Gocayne J.D."/>
            <person name="Amanatides P.G."/>
            <person name="Scherer S.E."/>
            <person name="Li P.W."/>
            <person name="Hoskins R.A."/>
            <person name="Galle R.F."/>
            <person name="George R.A."/>
            <person name="Lewis S.E."/>
            <person name="Richards S."/>
            <person name="Ashburner M."/>
            <person name="Henderson S.N."/>
            <person name="Sutton G.G."/>
            <person name="Wortman J.R."/>
            <person name="Yandell M.D."/>
            <person name="Zhang Q."/>
            <person name="Chen L.X."/>
            <person name="Brandon R.C."/>
            <person name="Rogers Y.-H.C."/>
            <person name="Blazej R.G."/>
            <person name="Champe M."/>
            <person name="Pfeiffer B.D."/>
            <person name="Wan K.H."/>
            <person name="Doyle C."/>
            <person name="Baxter E.G."/>
            <person name="Helt G."/>
            <person name="Nelson C.R."/>
            <person name="Miklos G.L.G."/>
            <person name="Abril J.F."/>
            <person name="Agbayani A."/>
            <person name="An H.-J."/>
            <person name="Andrews-Pfannkoch C."/>
            <person name="Baldwin D."/>
            <person name="Ballew R.M."/>
            <person name="Basu A."/>
            <person name="Baxendale J."/>
            <person name="Bayraktaroglu L."/>
            <person name="Beasley E.M."/>
            <person name="Beeson K.Y."/>
            <person name="Benos P.V."/>
            <person name="Berman B.P."/>
            <person name="Bhandari D."/>
            <person name="Bolshakov S."/>
            <person name="Borkova D."/>
            <person name="Botchan M.R."/>
            <person name="Bouck J."/>
            <person name="Brokstein P."/>
            <person name="Brottier P."/>
            <person name="Burtis K.C."/>
            <person name="Busam D.A."/>
            <person name="Butler H."/>
            <person name="Cadieu E."/>
            <person name="Center A."/>
            <person name="Chandra I."/>
            <person name="Cherry J.M."/>
            <person name="Cawley S."/>
            <person name="Dahlke C."/>
            <person name="Davenport L.B."/>
            <person name="Davies P."/>
            <person name="de Pablos B."/>
            <person name="Delcher A."/>
            <person name="Deng Z."/>
            <person name="Mays A.D."/>
            <person name="Dew I."/>
            <person name="Dietz S.M."/>
            <person name="Dodson K."/>
            <person name="Doup L.E."/>
            <person name="Downes M."/>
            <person name="Dugan-Rocha S."/>
            <person name="Dunkov B.C."/>
            <person name="Dunn P."/>
            <person name="Durbin K.J."/>
            <person name="Evangelista C.C."/>
            <person name="Ferraz C."/>
            <person name="Ferriera S."/>
            <person name="Fleischmann W."/>
            <person name="Fosler C."/>
            <person name="Gabrielian A.E."/>
            <person name="Garg N.S."/>
            <person name="Gelbart W.M."/>
            <person name="Glasser K."/>
            <person name="Glodek A."/>
            <person name="Gong F."/>
            <person name="Gorrell J.H."/>
            <person name="Gu Z."/>
            <person name="Guan P."/>
            <person name="Harris M."/>
            <person name="Harris N.L."/>
            <person name="Harvey D.A."/>
            <person name="Heiman T.J."/>
            <person name="Hernandez J.R."/>
            <person name="Houck J."/>
            <person name="Hostin D."/>
            <person name="Houston K.A."/>
            <person name="Howland T.J."/>
            <person name="Wei M.-H."/>
            <person name="Ibegwam C."/>
            <person name="Jalali M."/>
            <person name="Kalush F."/>
            <person name="Karpen G.H."/>
            <person name="Ke Z."/>
            <person name="Kennison J.A."/>
            <person name="Ketchum K.A."/>
            <person name="Kimmel B.E."/>
            <person name="Kodira C.D."/>
            <person name="Kraft C.L."/>
            <person name="Kravitz S."/>
            <person name="Kulp D."/>
            <person name="Lai Z."/>
            <person name="Lasko P."/>
            <person name="Lei Y."/>
            <person name="Levitsky A.A."/>
            <person name="Li J.H."/>
            <person name="Li Z."/>
            <person name="Liang Y."/>
            <person name="Lin X."/>
            <person name="Liu X."/>
            <person name="Mattei B."/>
            <person name="McIntosh T.C."/>
            <person name="McLeod M.P."/>
            <person name="McPherson D."/>
            <person name="Merkulov G."/>
            <person name="Milshina N.V."/>
            <person name="Mobarry C."/>
            <person name="Morris J."/>
            <person name="Moshrefi A."/>
            <person name="Mount S.M."/>
            <person name="Moy M."/>
            <person name="Murphy B."/>
            <person name="Murphy L."/>
            <person name="Muzny D.M."/>
            <person name="Nelson D.L."/>
            <person name="Nelson D.R."/>
            <person name="Nelson K.A."/>
            <person name="Nixon K."/>
            <person name="Nusskern D.R."/>
            <person name="Pacleb J.M."/>
            <person name="Palazzolo M."/>
            <person name="Pittman G.S."/>
            <person name="Pan S."/>
            <person name="Pollard J."/>
            <person name="Puri V."/>
            <person name="Reese M.G."/>
            <person name="Reinert K."/>
            <person name="Remington K."/>
            <person name="Saunders R.D.C."/>
            <person name="Scheeler F."/>
            <person name="Shen H."/>
            <person name="Shue B.C."/>
            <person name="Siden-Kiamos I."/>
            <person name="Simpson M."/>
            <person name="Skupski M.P."/>
            <person name="Smith T.J."/>
            <person name="Spier E."/>
            <person name="Spradling A.C."/>
            <person name="Stapleton M."/>
            <person name="Strong R."/>
            <person name="Sun E."/>
            <person name="Svirskas R."/>
            <person name="Tector C."/>
            <person name="Turner R."/>
            <person name="Venter E."/>
            <person name="Wang A.H."/>
            <person name="Wang X."/>
            <person name="Wang Z.-Y."/>
            <person name="Wassarman D.A."/>
            <person name="Weinstock G.M."/>
            <person name="Weissenbach J."/>
            <person name="Williams S.M."/>
            <person name="Woodage T."/>
            <person name="Worley K.C."/>
            <person name="Wu D."/>
            <person name="Yang S."/>
            <person name="Yao Q.A."/>
            <person name="Ye J."/>
            <person name="Yeh R.-F."/>
            <person name="Zaveri J.S."/>
            <person name="Zhan M."/>
            <person name="Zhang G."/>
            <person name="Zhao Q."/>
            <person name="Zheng L."/>
            <person name="Zheng X.H."/>
            <person name="Zhong F.N."/>
            <person name="Zhong W."/>
            <person name="Zhou X."/>
            <person name="Zhu S.C."/>
            <person name="Zhu X."/>
            <person name="Smith H.O."/>
            <person name="Gibbs R.A."/>
            <person name="Myers E.W."/>
            <person name="Rubin G.M."/>
            <person name="Venter J.C."/>
        </authorList>
    </citation>
    <scope>NUCLEOTIDE SEQUENCE [LARGE SCALE GENOMIC DNA]</scope>
    <source>
        <strain evidence="6">Berkeley</strain>
    </source>
</reference>
<reference evidence="19" key="3">
    <citation type="journal article" date="2002" name="Genome Biol.">
        <title>Annotation of the Drosophila melanogaster euchromatic genome: a systematic review.</title>
        <authorList>
            <person name="Misra S."/>
            <person name="Crosby M.A."/>
            <person name="Mungall C.J."/>
            <person name="Matthews B.B."/>
            <person name="Campbell K.S."/>
            <person name="Hradecky P."/>
            <person name="Huang Y."/>
            <person name="Kaminker J.S."/>
            <person name="Millburn G.H."/>
            <person name="Prochnik S.E."/>
            <person name="Smith C.D."/>
            <person name="Tupy J.L."/>
            <person name="Whitfield E.J."/>
            <person name="Bayraktaroglu L."/>
            <person name="Berman B.P."/>
            <person name="Bettencourt B.R."/>
            <person name="Celniker S.E."/>
            <person name="de Grey A.D.N.J."/>
            <person name="Drysdale R.A."/>
            <person name="Harris N.L."/>
            <person name="Richter J."/>
            <person name="Russo S."/>
            <person name="Schroeder A.J."/>
            <person name="Shu S.Q."/>
            <person name="Stapleton M."/>
            <person name="Yamada C."/>
            <person name="Ashburner M."/>
            <person name="Gelbart W.M."/>
            <person name="Rubin G.M."/>
            <person name="Lewis S.E."/>
        </authorList>
    </citation>
    <scope>GENOME REANNOTATION</scope>
    <source>
        <strain>Berkeley</strain>
    </source>
</reference>
<reference evidence="19" key="4">
    <citation type="journal article" date="2002" name="Genome Biol.">
        <title>A Drosophila full-length cDNA resource.</title>
        <authorList>
            <person name="Stapleton M."/>
            <person name="Carlson J.W."/>
            <person name="Brokstein P."/>
            <person name="Yu C."/>
            <person name="Champe M."/>
            <person name="George R.A."/>
            <person name="Guarin H."/>
            <person name="Kronmiller B."/>
            <person name="Pacleb J.M."/>
            <person name="Park S."/>
            <person name="Wan K.H."/>
            <person name="Rubin G.M."/>
            <person name="Celniker S.E."/>
        </authorList>
    </citation>
    <scope>NUCLEOTIDE SEQUENCE [LARGE SCALE MRNA]</scope>
    <source>
        <strain evidence="9">Berkeley</strain>
        <tissue evidence="9">Embryo</tissue>
    </source>
</reference>
<reference key="5">
    <citation type="journal article" date="1994" name="Development">
        <title>The Drosophila maternal-effect mutation grapes causes a metaphase arrest at nuclear cycle 13.</title>
        <authorList>
            <person name="Fogarty P."/>
            <person name="Kalpin R.F."/>
            <person name="Sullivan W."/>
        </authorList>
    </citation>
    <scope>FUNCTION</scope>
</reference>
<reference key="6">
    <citation type="journal article" date="1997" name="Nature">
        <title>DNA-replication checkpoint control at the Drosophila midblastula transition.</title>
        <authorList>
            <person name="Sibon O.C.M."/>
            <person name="Stevenson V.A."/>
            <person name="Theurkauf W.E."/>
        </authorList>
    </citation>
    <scope>FUNCTION</scope>
    <scope>DEVELOPMENTAL STAGE</scope>
</reference>
<reference key="7">
    <citation type="journal article" date="1999" name="Curr. Biol.">
        <title>The Drosophila ATM homologue Mei-41 has an essential checkpoint function at the midblastula transition.</title>
        <authorList>
            <person name="Sibon O.C.M."/>
            <person name="Laurencon A."/>
            <person name="Hawley R."/>
            <person name="Theurkauf W.E."/>
        </authorList>
    </citation>
    <scope>FUNCTION</scope>
</reference>
<reference key="8">
    <citation type="journal article" date="1999" name="Curr. Biol.">
        <title>Drosophila grapes/CHK1 mutants are defective in cyclin proteolysis and coordination of mitotic events.</title>
        <authorList>
            <person name="Su T.T."/>
            <person name="Campbell S.D."/>
            <person name="O'Farrell P.H."/>
        </authorList>
    </citation>
    <scope>FUNCTION</scope>
</reference>
<reference key="9">
    <citation type="journal article" date="2000" name="Nat. Cell Biol.">
        <title>The grapes checkpoint coordinates nuclear envelope breakdown and chromosome condensation.</title>
        <authorList>
            <person name="Yu K.R."/>
            <person name="Saint R.B."/>
            <person name="Sullivan W."/>
        </authorList>
    </citation>
    <scope>FUNCTION</scope>
    <scope>SUBCELLULAR LOCATION</scope>
</reference>
<reference key="10">
    <citation type="journal article" date="2002" name="Proc. Natl. Acad. Sci. U.S.A.">
        <title>Chk2 regulates irradiation-induced, p53-mediated apoptosis in Drosophila.</title>
        <authorList>
            <person name="Peters M."/>
            <person name="DeLuca C."/>
            <person name="Hirao A."/>
            <person name="Stambolic V."/>
            <person name="Potter J."/>
            <person name="Zhou L."/>
            <person name="Liepa J."/>
            <person name="Snow B."/>
            <person name="Arya S."/>
            <person name="Wong J."/>
            <person name="Bouchard D."/>
            <person name="Binari R."/>
            <person name="Manoukian A.S."/>
            <person name="Mak T.W."/>
        </authorList>
    </citation>
    <scope>MUTAGENESIS OF ASP-143</scope>
</reference>
<reference key="11">
    <citation type="journal article" date="2003" name="Dev. Cell">
        <title>Control of cleavage cycles in Drosophila embryos by fruhstart.</title>
        <authorList>
            <person name="Grosshans J."/>
            <person name="Mueller H.A.J."/>
            <person name="Wieschaus E."/>
        </authorList>
    </citation>
    <scope>FUNCTION</scope>
</reference>
<reference key="12">
    <citation type="journal article" date="2004" name="Curr. Biol.">
        <title>Relative contribution of DNA repair, cell cycle checkpoints, and cell death to survival after DNA damage in Drosophila larvae.</title>
        <authorList>
            <person name="Jaklevic B.R."/>
            <person name="Su T.T."/>
        </authorList>
    </citation>
    <scope>FUNCTION</scope>
</reference>
<reference key="13">
    <citation type="journal article" date="2005" name="Curr. Biol.">
        <title>The Drosophila Grp/Chk1 DNA damage checkpoint controls entry into anaphase.</title>
        <authorList>
            <person name="Royou A."/>
            <person name="Macias H."/>
            <person name="Sullivan W."/>
        </authorList>
    </citation>
    <scope>FUNCTION</scope>
</reference>
<reference key="14">
    <citation type="journal article" date="2005" name="J. Cell Sci.">
        <title>Grp/DChk1 is required for G2-M checkpoint activation in Drosophila S2 cells, whereas Dmnk/DChk2 is dispensable.</title>
        <authorList>
            <person name="de Vries H.I."/>
            <person name="Uyetake L."/>
            <person name="Lemstra W."/>
            <person name="Brunsting J.F."/>
            <person name="Su T.T."/>
            <person name="Kampinga H.H."/>
            <person name="Sibon O.C.M."/>
        </authorList>
    </citation>
    <scope>FUNCTION</scope>
    <scope>PHOSPHORYLATION</scope>
</reference>
<reference key="15">
    <citation type="journal article" date="2005" name="J. Cell Sci.">
        <title>Regulation of mitosis in response to damaged or incompletely replicated DNA require different levels of grapes (Drosophila Chk1).</title>
        <authorList>
            <person name="Purdy A."/>
            <person name="Uyetake L."/>
            <person name="Cordeiro M.G."/>
            <person name="Su T.T."/>
        </authorList>
    </citation>
    <scope>FUNCTION</scope>
    <scope>SUBCELLULAR LOCATION</scope>
</reference>
<reference key="16">
    <citation type="journal article" date="2012" name="DNA Repair">
        <title>Drosophila Claspin is required for the G2 arrest that is induced by DNA replication stress but not by DNA double-strand breaks.</title>
        <authorList>
            <person name="Lee E.M."/>
            <person name="Trinh T.T."/>
            <person name="Shim H.J."/>
            <person name="Park S.Y."/>
            <person name="Nguyen T.T."/>
            <person name="Kim M.J."/>
            <person name="Song Y.H."/>
        </authorList>
    </citation>
    <scope>MUTAGENESIS OF PRO-189</scope>
</reference>
<reference key="17">
    <citation type="journal article" date="2021" name="PLoS Genet.">
        <title>dRTEL1 is essential for the maintenance of Drosophila male germline stem cells.</title>
        <authorList>
            <person name="Yang Y."/>
            <person name="Kong R."/>
            <person name="Goh F.G."/>
            <person name="Somers W.G."/>
            <person name="Hime G.R."/>
            <person name="Li Z."/>
            <person name="Cai Y."/>
        </authorList>
    </citation>
    <scope>DISRUPTION PHENOTYPE</scope>
</reference>
<proteinExistence type="evidence at protein level"/>
<name>CHK1_DROME</name>
<evidence type="ECO:0000250" key="1">
    <source>
        <dbReference type="UniProtKB" id="O14757"/>
    </source>
</evidence>
<evidence type="ECO:0000255" key="2">
    <source>
        <dbReference type="PROSITE-ProRule" id="PRU00159"/>
    </source>
</evidence>
<evidence type="ECO:0000256" key="3">
    <source>
        <dbReference type="SAM" id="MobiDB-lite"/>
    </source>
</evidence>
<evidence type="ECO:0000269" key="4">
    <source>
    </source>
</evidence>
<evidence type="ECO:0000269" key="5">
    <source>
    </source>
</evidence>
<evidence type="ECO:0000269" key="6">
    <source>
    </source>
</evidence>
<evidence type="ECO:0000269" key="7">
    <source>
    </source>
</evidence>
<evidence type="ECO:0000269" key="8">
    <source>
    </source>
</evidence>
<evidence type="ECO:0000269" key="9">
    <source>
    </source>
</evidence>
<evidence type="ECO:0000269" key="10">
    <source>
    </source>
</evidence>
<evidence type="ECO:0000269" key="11">
    <source>
    </source>
</evidence>
<evidence type="ECO:0000269" key="12">
    <source>
    </source>
</evidence>
<evidence type="ECO:0000269" key="13">
    <source>
    </source>
</evidence>
<evidence type="ECO:0000269" key="14">
    <source>
    </source>
</evidence>
<evidence type="ECO:0000269" key="15">
    <source>
    </source>
</evidence>
<evidence type="ECO:0000269" key="16">
    <source>
    </source>
</evidence>
<evidence type="ECO:0000269" key="17">
    <source>
    </source>
</evidence>
<evidence type="ECO:0000269" key="18">
    <source>
    </source>
</evidence>
<evidence type="ECO:0000305" key="19"/>
<evidence type="ECO:0000312" key="20">
    <source>
        <dbReference type="EMBL" id="AAK93385.1"/>
    </source>
</evidence>
<evidence type="ECO:0000312" key="21">
    <source>
        <dbReference type="FlyBase" id="FBgn0261278"/>
    </source>
</evidence>
<dbReference type="EC" id="2.7.11.1"/>
<dbReference type="EMBL" id="AF057041">
    <property type="protein sequence ID" value="AAC13566.1"/>
    <property type="molecule type" value="mRNA"/>
</dbReference>
<dbReference type="EMBL" id="AE014134">
    <property type="protein sequence ID" value="AAF53551.2"/>
    <property type="molecule type" value="Genomic_DNA"/>
</dbReference>
<dbReference type="EMBL" id="AE014134">
    <property type="protein sequence ID" value="AAF53552.2"/>
    <property type="molecule type" value="Genomic_DNA"/>
</dbReference>
<dbReference type="EMBL" id="AE014134">
    <property type="protein sequence ID" value="AAN10952.1"/>
    <property type="molecule type" value="Genomic_DNA"/>
</dbReference>
<dbReference type="EMBL" id="AY051961">
    <property type="protein sequence ID" value="AAK93385.1"/>
    <property type="molecule type" value="mRNA"/>
</dbReference>
<dbReference type="RefSeq" id="NP_477011.1">
    <property type="nucleotide sequence ID" value="NM_057663.4"/>
</dbReference>
<dbReference type="RefSeq" id="NP_723985.1">
    <property type="nucleotide sequence ID" value="NM_165171.3"/>
</dbReference>
<dbReference type="RefSeq" id="NP_723986.1">
    <property type="nucleotide sequence ID" value="NM_165172.3"/>
</dbReference>
<dbReference type="SMR" id="O61661"/>
<dbReference type="BioGRID" id="61001">
    <property type="interactions" value="50"/>
</dbReference>
<dbReference type="FunCoup" id="O61661">
    <property type="interactions" value="1609"/>
</dbReference>
<dbReference type="IntAct" id="O61661">
    <property type="interactions" value="26"/>
</dbReference>
<dbReference type="STRING" id="7227.FBpp0080443"/>
<dbReference type="PaxDb" id="7227-FBpp0080441"/>
<dbReference type="DNASU" id="34993"/>
<dbReference type="EnsemblMetazoa" id="FBtr0080884">
    <property type="protein sequence ID" value="FBpp0080441"/>
    <property type="gene ID" value="FBgn0261278"/>
</dbReference>
<dbReference type="EnsemblMetazoa" id="FBtr0080885">
    <property type="protein sequence ID" value="FBpp0080442"/>
    <property type="gene ID" value="FBgn0261278"/>
</dbReference>
<dbReference type="EnsemblMetazoa" id="FBtr0080886">
    <property type="protein sequence ID" value="FBpp0080443"/>
    <property type="gene ID" value="FBgn0261278"/>
</dbReference>
<dbReference type="GeneID" id="34993"/>
<dbReference type="KEGG" id="dme:Dmel_CG17161"/>
<dbReference type="UCSC" id="CG17161-RB">
    <property type="organism name" value="d. melanogaster"/>
</dbReference>
<dbReference type="AGR" id="FB:FBgn0261278"/>
<dbReference type="CTD" id="2922"/>
<dbReference type="FlyBase" id="FBgn0261278">
    <property type="gene designation" value="grp"/>
</dbReference>
<dbReference type="VEuPathDB" id="VectorBase:FBgn0261278"/>
<dbReference type="eggNOG" id="KOG0590">
    <property type="taxonomic scope" value="Eukaryota"/>
</dbReference>
<dbReference type="GeneTree" id="ENSGT00940000159682"/>
<dbReference type="HOGENOM" id="CLU_000288_59_8_1"/>
<dbReference type="InParanoid" id="O61661"/>
<dbReference type="OMA" id="GYTCKVG"/>
<dbReference type="OrthoDB" id="539158at2759"/>
<dbReference type="PhylomeDB" id="O61661"/>
<dbReference type="Reactome" id="R-DME-176187">
    <property type="pathway name" value="Activation of ATR in response to replication stress"/>
</dbReference>
<dbReference type="Reactome" id="R-DME-5693607">
    <property type="pathway name" value="Processing of DNA double-strand break ends"/>
</dbReference>
<dbReference type="Reactome" id="R-DME-5693616">
    <property type="pathway name" value="Presynaptic phase of homologous DNA pairing and strand exchange"/>
</dbReference>
<dbReference type="Reactome" id="R-DME-6804756">
    <property type="pathway name" value="Regulation of TP53 Activity through Phosphorylation"/>
</dbReference>
<dbReference type="Reactome" id="R-DME-69473">
    <property type="pathway name" value="G2/M DNA damage checkpoint"/>
</dbReference>
<dbReference type="Reactome" id="R-DME-69601">
    <property type="pathway name" value="Ubiquitin Mediated Degradation of Phosphorylated Cdc25A"/>
</dbReference>
<dbReference type="Reactome" id="R-DME-8953750">
    <property type="pathway name" value="Transcriptional Regulation by E2F6"/>
</dbReference>
<dbReference type="SignaLink" id="O61661"/>
<dbReference type="BioGRID-ORCS" id="34993">
    <property type="hits" value="2 hits in 3 CRISPR screens"/>
</dbReference>
<dbReference type="ChiTaRS" id="gpp">
    <property type="organism name" value="fly"/>
</dbReference>
<dbReference type="GenomeRNAi" id="34993"/>
<dbReference type="PRO" id="PR:O61661"/>
<dbReference type="Proteomes" id="UP000000803">
    <property type="component" value="Chromosome 2L"/>
</dbReference>
<dbReference type="Bgee" id="FBgn0261278">
    <property type="expression patterns" value="Expressed in cyst progenitor cell (Drosophila) in testis and 193 other cell types or tissues"/>
</dbReference>
<dbReference type="ExpressionAtlas" id="O61661">
    <property type="expression patterns" value="baseline and differential"/>
</dbReference>
<dbReference type="GO" id="GO:0005829">
    <property type="term" value="C:cytosol"/>
    <property type="evidence" value="ECO:0007005"/>
    <property type="project" value="FlyBase"/>
</dbReference>
<dbReference type="GO" id="GO:0005634">
    <property type="term" value="C:nucleus"/>
    <property type="evidence" value="ECO:0000314"/>
    <property type="project" value="UniProtKB"/>
</dbReference>
<dbReference type="GO" id="GO:0005524">
    <property type="term" value="F:ATP binding"/>
    <property type="evidence" value="ECO:0007669"/>
    <property type="project" value="UniProtKB-KW"/>
</dbReference>
<dbReference type="GO" id="GO:0035402">
    <property type="term" value="F:histone H3T11 kinase activity"/>
    <property type="evidence" value="ECO:0000318"/>
    <property type="project" value="GO_Central"/>
</dbReference>
<dbReference type="GO" id="GO:0004672">
    <property type="term" value="F:protein kinase activity"/>
    <property type="evidence" value="ECO:0000314"/>
    <property type="project" value="BHF-UCL"/>
</dbReference>
<dbReference type="GO" id="GO:0106310">
    <property type="term" value="F:protein serine kinase activity"/>
    <property type="evidence" value="ECO:0007669"/>
    <property type="project" value="RHEA"/>
</dbReference>
<dbReference type="GO" id="GO:0004674">
    <property type="term" value="F:protein serine/threonine kinase activity"/>
    <property type="evidence" value="ECO:0000303"/>
    <property type="project" value="UniProtKB"/>
</dbReference>
<dbReference type="GO" id="GO:0051299">
    <property type="term" value="P:centrosome separation"/>
    <property type="evidence" value="ECO:0000315"/>
    <property type="project" value="FlyBase"/>
</dbReference>
<dbReference type="GO" id="GO:0000077">
    <property type="term" value="P:DNA damage checkpoint signaling"/>
    <property type="evidence" value="ECO:0000315"/>
    <property type="project" value="UniProtKB"/>
</dbReference>
<dbReference type="GO" id="GO:0033314">
    <property type="term" value="P:mitotic DNA replication checkpoint signaling"/>
    <property type="evidence" value="ECO:0000315"/>
    <property type="project" value="UniProtKB"/>
</dbReference>
<dbReference type="GO" id="GO:0007095">
    <property type="term" value="P:mitotic G2 DNA damage checkpoint signaling"/>
    <property type="evidence" value="ECO:0000318"/>
    <property type="project" value="GO_Central"/>
</dbReference>
<dbReference type="GO" id="GO:0006468">
    <property type="term" value="P:protein phosphorylation"/>
    <property type="evidence" value="ECO:0000303"/>
    <property type="project" value="UniProtKB"/>
</dbReference>
<dbReference type="GO" id="GO:0051726">
    <property type="term" value="P:regulation of cell cycle"/>
    <property type="evidence" value="ECO:0000315"/>
    <property type="project" value="FlyBase"/>
</dbReference>
<dbReference type="GO" id="GO:0007348">
    <property type="term" value="P:regulation of syncytial blastoderm mitotic cell cycle"/>
    <property type="evidence" value="ECO:0000315"/>
    <property type="project" value="UniProtKB"/>
</dbReference>
<dbReference type="GO" id="GO:0051225">
    <property type="term" value="P:spindle assembly"/>
    <property type="evidence" value="ECO:0000315"/>
    <property type="project" value="FlyBase"/>
</dbReference>
<dbReference type="GO" id="GO:0042060">
    <property type="term" value="P:wound healing"/>
    <property type="evidence" value="ECO:0007001"/>
    <property type="project" value="FlyBase"/>
</dbReference>
<dbReference type="CDD" id="cd14069">
    <property type="entry name" value="STKc_Chk1"/>
    <property type="match status" value="1"/>
</dbReference>
<dbReference type="FunFam" id="1.10.510.10:FF:000301">
    <property type="entry name" value="Serine/threonine-protein kinase Chk1"/>
    <property type="match status" value="1"/>
</dbReference>
<dbReference type="FunFam" id="3.30.200.20:FF:000229">
    <property type="entry name" value="Serine/threonine-protein kinase Chk1"/>
    <property type="match status" value="1"/>
</dbReference>
<dbReference type="FunFam" id="3.30.310.80:FF:000018">
    <property type="entry name" value="Serine/threonine-protein kinase grp"/>
    <property type="match status" value="1"/>
</dbReference>
<dbReference type="Gene3D" id="3.30.310.80">
    <property type="entry name" value="Kinase associated domain 1, KA1"/>
    <property type="match status" value="1"/>
</dbReference>
<dbReference type="Gene3D" id="3.30.200.20">
    <property type="entry name" value="Phosphorylase Kinase, domain 1"/>
    <property type="match status" value="1"/>
</dbReference>
<dbReference type="Gene3D" id="1.10.510.10">
    <property type="entry name" value="Transferase(Phosphotransferase) domain 1"/>
    <property type="match status" value="1"/>
</dbReference>
<dbReference type="InterPro" id="IPR034670">
    <property type="entry name" value="Chk1_catalytic_dom"/>
</dbReference>
<dbReference type="InterPro" id="IPR011009">
    <property type="entry name" value="Kinase-like_dom_sf"/>
</dbReference>
<dbReference type="InterPro" id="IPR000719">
    <property type="entry name" value="Prot_kinase_dom"/>
</dbReference>
<dbReference type="InterPro" id="IPR017441">
    <property type="entry name" value="Protein_kinase_ATP_BS"/>
</dbReference>
<dbReference type="InterPro" id="IPR008271">
    <property type="entry name" value="Ser/Thr_kinase_AS"/>
</dbReference>
<dbReference type="PANTHER" id="PTHR24346">
    <property type="entry name" value="MAP/MICROTUBULE AFFINITY-REGULATING KINASE"/>
    <property type="match status" value="1"/>
</dbReference>
<dbReference type="PANTHER" id="PTHR24346:SF107">
    <property type="entry name" value="SERINE_THREONINE-PROTEIN KINASE CHK1"/>
    <property type="match status" value="1"/>
</dbReference>
<dbReference type="Pfam" id="PF00069">
    <property type="entry name" value="Pkinase"/>
    <property type="match status" value="1"/>
</dbReference>
<dbReference type="SMART" id="SM00220">
    <property type="entry name" value="S_TKc"/>
    <property type="match status" value="1"/>
</dbReference>
<dbReference type="SUPFAM" id="SSF56112">
    <property type="entry name" value="Protein kinase-like (PK-like)"/>
    <property type="match status" value="1"/>
</dbReference>
<dbReference type="PROSITE" id="PS00107">
    <property type="entry name" value="PROTEIN_KINASE_ATP"/>
    <property type="match status" value="1"/>
</dbReference>
<dbReference type="PROSITE" id="PS50011">
    <property type="entry name" value="PROTEIN_KINASE_DOM"/>
    <property type="match status" value="1"/>
</dbReference>
<dbReference type="PROSITE" id="PS00108">
    <property type="entry name" value="PROTEIN_KINASE_ST"/>
    <property type="match status" value="1"/>
</dbReference>
<comment type="function">
    <text evidence="4 5 7 10 11 12 13 14 16 17 18">Serine/threonine-protein kinase which is required for checkpoint-mediated cell cycle arrest and activation of DNA repair in response to the presence of DNA damage or unreplicated DNA. May also negatively regulate cell cycle progression during unperturbed cell cycles. May phosphorylate the CDC25 phosphatase stg, which promotes its degradation. This results in increased inhibitory tyrosine phosphorylation of Cdk1-cyclin complexes and consequent inhibition of cell cycle progression.</text>
</comment>
<comment type="catalytic activity">
    <reaction evidence="1">
        <text>L-seryl-[protein] + ATP = O-phospho-L-seryl-[protein] + ADP + H(+)</text>
        <dbReference type="Rhea" id="RHEA:17989"/>
        <dbReference type="Rhea" id="RHEA-COMP:9863"/>
        <dbReference type="Rhea" id="RHEA-COMP:11604"/>
        <dbReference type="ChEBI" id="CHEBI:15378"/>
        <dbReference type="ChEBI" id="CHEBI:29999"/>
        <dbReference type="ChEBI" id="CHEBI:30616"/>
        <dbReference type="ChEBI" id="CHEBI:83421"/>
        <dbReference type="ChEBI" id="CHEBI:456216"/>
        <dbReference type="EC" id="2.7.11.1"/>
    </reaction>
</comment>
<comment type="catalytic activity">
    <reaction evidence="1">
        <text>L-threonyl-[protein] + ATP = O-phospho-L-threonyl-[protein] + ADP + H(+)</text>
        <dbReference type="Rhea" id="RHEA:46608"/>
        <dbReference type="Rhea" id="RHEA-COMP:11060"/>
        <dbReference type="Rhea" id="RHEA-COMP:11605"/>
        <dbReference type="ChEBI" id="CHEBI:15378"/>
        <dbReference type="ChEBI" id="CHEBI:30013"/>
        <dbReference type="ChEBI" id="CHEBI:30616"/>
        <dbReference type="ChEBI" id="CHEBI:61977"/>
        <dbReference type="ChEBI" id="CHEBI:456216"/>
        <dbReference type="EC" id="2.7.11.1"/>
    </reaction>
</comment>
<comment type="subcellular location">
    <subcellularLocation>
        <location evidence="7 14">Nucleus</location>
    </subcellularLocation>
</comment>
<comment type="developmental stage">
    <text evidence="17 18">Expressed both maternally and zygotically. Maternally supplied mRNA is degraded during progression from nuclear stage 12 to nuclear stage 13. Zygotic expression is seen at reduced levels later in embryogenesis and during larval development. Higher expression is seen in pupae, coincident with ovarian differentiation. May be activated during the syncytial blastoderm divisions which precede cellularization, the Drosophila equivalent of the mid-blastula transition (MBT). Developmentally regulated activation of the DNA replication checkpoint may occur as the nucleo-cytoplasmic ratio increases and maternal replication factors are depleted. Elongation of the embryonic cell cycle may allow time for the transcription of genes that initiate the switch from maternal to zygotic control of embryogenesis.</text>
</comment>
<comment type="PTM">
    <text evidence="13">Phosphorylated in a MEI-41/ATR dependent manner in response to DNA damage or the presence of unreplicated DNA.</text>
</comment>
<comment type="disruption phenotype">
    <text evidence="18">In the germline, simultaneous RNAi-mediated knockdown of grp and Rtel1 results in partial rescue of loss of germline stem cell observed in the single Rtel1 knockdown.</text>
</comment>
<comment type="similarity">
    <text evidence="19">Belongs to the protein kinase superfamily. CAMK Ser/Thr protein kinase family. NIM1 subfamily.</text>
</comment>